<keyword id="KW-0027">Amidation</keyword>
<keyword id="KW-0165">Cleavage on pair of basic residues</keyword>
<keyword id="KW-1015">Disulfide bond</keyword>
<keyword id="KW-0372">Hormone</keyword>
<keyword id="KW-1185">Reference proteome</keyword>
<keyword id="KW-0964">Secreted</keyword>
<keyword id="KW-0732">Signal</keyword>
<organism>
    <name type="scientific">Gallus gallus</name>
    <name type="common">Chicken</name>
    <dbReference type="NCBI Taxonomy" id="9031"/>
    <lineage>
        <taxon>Eukaryota</taxon>
        <taxon>Metazoa</taxon>
        <taxon>Chordata</taxon>
        <taxon>Craniata</taxon>
        <taxon>Vertebrata</taxon>
        <taxon>Euteleostomi</taxon>
        <taxon>Archelosauria</taxon>
        <taxon>Archosauria</taxon>
        <taxon>Dinosauria</taxon>
        <taxon>Saurischia</taxon>
        <taxon>Theropoda</taxon>
        <taxon>Coelurosauria</taxon>
        <taxon>Aves</taxon>
        <taxon>Neognathae</taxon>
        <taxon>Galloanserae</taxon>
        <taxon>Galliformes</taxon>
        <taxon>Phasianidae</taxon>
        <taxon>Phasianinae</taxon>
        <taxon>Gallus</taxon>
    </lineage>
</organism>
<proteinExistence type="evidence at transcript level"/>
<accession>P24787</accession>
<name>NEUV_CHICK</name>
<dbReference type="EMBL" id="X55130">
    <property type="protein sequence ID" value="CAA38923.1"/>
    <property type="molecule type" value="mRNA"/>
</dbReference>
<dbReference type="PIR" id="S14480">
    <property type="entry name" value="S14480"/>
</dbReference>
<dbReference type="RefSeq" id="NP_990516.1">
    <property type="nucleotide sequence ID" value="NM_205185.3"/>
</dbReference>
<dbReference type="SMR" id="P24787"/>
<dbReference type="FunCoup" id="P24787">
    <property type="interactions" value="64"/>
</dbReference>
<dbReference type="STRING" id="9031.ENSGALP00000022811"/>
<dbReference type="PaxDb" id="9031-ENSGALP00000022811"/>
<dbReference type="Ensembl" id="ENSGALT00010039964.1">
    <property type="protein sequence ID" value="ENSGALP00010023139.1"/>
    <property type="gene ID" value="ENSGALG00010016587.1"/>
</dbReference>
<dbReference type="GeneID" id="396101"/>
<dbReference type="KEGG" id="gga:396101"/>
<dbReference type="CTD" id="551"/>
<dbReference type="VEuPathDB" id="HostDB:geneid_396101"/>
<dbReference type="eggNOG" id="ENOG502S21K">
    <property type="taxonomic scope" value="Eukaryota"/>
</dbReference>
<dbReference type="GeneTree" id="ENSGT00390000004511"/>
<dbReference type="HOGENOM" id="CLU_125770_0_0_1"/>
<dbReference type="InParanoid" id="P24787"/>
<dbReference type="OMA" id="CMTEPEC"/>
<dbReference type="OrthoDB" id="10056056at2759"/>
<dbReference type="PhylomeDB" id="P24787"/>
<dbReference type="TreeFam" id="TF333018"/>
<dbReference type="PRO" id="PR:P24787"/>
<dbReference type="Proteomes" id="UP000000539">
    <property type="component" value="Chromosome 4"/>
</dbReference>
<dbReference type="Bgee" id="ENSGALG00000014117">
    <property type="expression patterns" value="Expressed in brain and 3 other cell types or tissues"/>
</dbReference>
<dbReference type="GO" id="GO:0005615">
    <property type="term" value="C:extracellular space"/>
    <property type="evidence" value="ECO:0000318"/>
    <property type="project" value="GO_Central"/>
</dbReference>
<dbReference type="GO" id="GO:0030141">
    <property type="term" value="C:secretory granule"/>
    <property type="evidence" value="ECO:0000318"/>
    <property type="project" value="GO_Central"/>
</dbReference>
<dbReference type="GO" id="GO:0005185">
    <property type="term" value="F:neurohypophyseal hormone activity"/>
    <property type="evidence" value="ECO:0007669"/>
    <property type="project" value="InterPro"/>
</dbReference>
<dbReference type="GO" id="GO:0005184">
    <property type="term" value="F:neuropeptide hormone activity"/>
    <property type="evidence" value="ECO:0000318"/>
    <property type="project" value="GO_Central"/>
</dbReference>
<dbReference type="FunFam" id="2.60.9.10:FF:000001">
    <property type="entry name" value="oxytocin-neurophysin 1"/>
    <property type="match status" value="1"/>
</dbReference>
<dbReference type="Gene3D" id="2.60.9.10">
    <property type="entry name" value="Neurohypophysial hormone domain"/>
    <property type="match status" value="1"/>
</dbReference>
<dbReference type="InterPro" id="IPR000981">
    <property type="entry name" value="Neurhyp_horm"/>
</dbReference>
<dbReference type="InterPro" id="IPR036387">
    <property type="entry name" value="Neurhyp_horm_dom_sf"/>
</dbReference>
<dbReference type="InterPro" id="IPR022423">
    <property type="entry name" value="Neurohypophysial_hormone_CS"/>
</dbReference>
<dbReference type="PANTHER" id="PTHR11681">
    <property type="entry name" value="NEUROPHYSIN"/>
    <property type="match status" value="1"/>
</dbReference>
<dbReference type="PANTHER" id="PTHR11681:SF15">
    <property type="entry name" value="VASOTOCIN-NEUROPHYSIN VT"/>
    <property type="match status" value="1"/>
</dbReference>
<dbReference type="Pfam" id="PF00220">
    <property type="entry name" value="Hormone_4"/>
    <property type="match status" value="1"/>
</dbReference>
<dbReference type="Pfam" id="PF00184">
    <property type="entry name" value="Hormone_5"/>
    <property type="match status" value="1"/>
</dbReference>
<dbReference type="PIRSF" id="PIRSF001815">
    <property type="entry name" value="Nonapeptide_hormone_precursor"/>
    <property type="match status" value="1"/>
</dbReference>
<dbReference type="PRINTS" id="PR00831">
    <property type="entry name" value="NEUROPHYSIN"/>
</dbReference>
<dbReference type="SMART" id="SM00003">
    <property type="entry name" value="NH"/>
    <property type="match status" value="1"/>
</dbReference>
<dbReference type="SUPFAM" id="SSF49606">
    <property type="entry name" value="Neurophysin II"/>
    <property type="match status" value="1"/>
</dbReference>
<dbReference type="PROSITE" id="PS00264">
    <property type="entry name" value="NEUROHYPOPHYS_HORM"/>
    <property type="match status" value="1"/>
</dbReference>
<comment type="function">
    <text>Vasotocin is an antidiuretic hormone.</text>
</comment>
<comment type="subcellular location">
    <subcellularLocation>
        <location>Secreted</location>
    </subcellularLocation>
</comment>
<comment type="PTM">
    <text evidence="1">Seven disulfide bonds are present in neurophysin.</text>
</comment>
<comment type="similarity">
    <text evidence="3">Belongs to the vasopressin/oxytocin family.</text>
</comment>
<evidence type="ECO:0000250" key="1"/>
<evidence type="ECO:0000250" key="2">
    <source>
        <dbReference type="UniProtKB" id="P01175"/>
    </source>
</evidence>
<evidence type="ECO:0000305" key="3"/>
<protein>
    <recommendedName>
        <fullName>Vasotocin-neurophysin VT</fullName>
    </recommendedName>
    <component>
        <recommendedName>
            <fullName>Vasotocin</fullName>
            <shortName>VT</shortName>
        </recommendedName>
    </component>
    <component>
        <recommendedName>
            <fullName>Neurophysin VT</fullName>
        </recommendedName>
    </component>
</protein>
<sequence length="161" mass="16693">MAEPSLPLSFLCLLALSSACYIQNCPRGGKRALGDTALRQCLPCGPGNRGRCFGPGICCGAELGCYLGTAETRRCAEEDYMPSPCQAGGQPCGSDGRCAANGVCCSADTCAMDAVCLEEGSEQAEEAAEKNLTVLDGAAGDLLLRLMHLANRQQQGKQPGL</sequence>
<reference key="1">
    <citation type="submission" date="1990-11" db="EMBL/GenBank/DDBJ databases">
        <authorList>
            <person name="Hunt N."/>
            <person name="Kluever D."/>
            <person name="Ivell R."/>
        </authorList>
    </citation>
    <scope>NUCLEOTIDE SEQUENCE [MRNA]</scope>
    <source>
        <strain>White leghorn</strain>
        <tissue>Hypothalamus</tissue>
    </source>
</reference>
<feature type="signal peptide">
    <location>
        <begin position="1"/>
        <end position="19"/>
    </location>
</feature>
<feature type="peptide" id="PRO_0000020532" description="Vasotocin">
    <location>
        <begin position="20"/>
        <end position="28"/>
    </location>
</feature>
<feature type="chain" id="PRO_0000020533" description="Neurophysin VT">
    <location>
        <begin position="32"/>
        <end position="161"/>
    </location>
</feature>
<feature type="modified residue" description="Glycine amide" evidence="1">
    <location>
        <position position="28"/>
    </location>
</feature>
<feature type="disulfide bond" evidence="2">
    <location>
        <begin position="20"/>
        <end position="25"/>
    </location>
</feature>
<feature type="disulfide bond" evidence="2">
    <location>
        <begin position="41"/>
        <end position="85"/>
    </location>
</feature>
<feature type="disulfide bond" evidence="2">
    <location>
        <begin position="44"/>
        <end position="58"/>
    </location>
</feature>
<feature type="disulfide bond" evidence="2">
    <location>
        <begin position="52"/>
        <end position="75"/>
    </location>
</feature>
<feature type="disulfide bond" evidence="2">
    <location>
        <begin position="59"/>
        <end position="65"/>
    </location>
</feature>
<feature type="disulfide bond" evidence="2">
    <location>
        <begin position="92"/>
        <end position="104"/>
    </location>
</feature>
<feature type="disulfide bond" evidence="2">
    <location>
        <begin position="98"/>
        <end position="116"/>
    </location>
</feature>
<feature type="disulfide bond" evidence="2">
    <location>
        <begin position="105"/>
        <end position="110"/>
    </location>
</feature>